<protein>
    <recommendedName>
        <fullName>LOB domain-containing protein 39</fullName>
    </recommendedName>
    <alternativeName>
        <fullName>ASYMMETRIC LEAVES 2-like protein 41</fullName>
        <shortName>AS2-like protein 41</shortName>
    </alternativeName>
</protein>
<sequence length="240" mass="26612">MSCNGCRVLRKGCSETCILRPCLQWIESAESQGHATVFVAKFFGRAGLMSFISSVPELQRPALFQSLLFEACGRTVNPVNGAVGMLWTRNWHVCQAAVETVLRGGTLRPISDLLESPSLMISCDESSEIWHQDVSRNQTHHCRFSTSRSTTEMKDSLVNRKRLKSDSDLDLQVNHGLTLTAPAVPVPFLPPSSFCKVVKGDRPGSPSEESVTTSCWENGMRGDNKQKRNKGEKKLLNLFV</sequence>
<feature type="chain" id="PRO_0000132289" description="LOB domain-containing protein 39">
    <location>
        <begin position="1"/>
        <end position="240"/>
    </location>
</feature>
<feature type="domain" description="LOB" evidence="1">
    <location>
        <begin position="1"/>
        <end position="107"/>
    </location>
</feature>
<feature type="region of interest" description="Disordered" evidence="2">
    <location>
        <begin position="200"/>
        <end position="233"/>
    </location>
</feature>
<feature type="compositionally biased region" description="Polar residues" evidence="2">
    <location>
        <begin position="207"/>
        <end position="216"/>
    </location>
</feature>
<feature type="sequence conflict" description="In Ref. 5; AAM64844." evidence="4" ref="5">
    <original>C</original>
    <variation>S</variation>
    <location>
        <position position="123"/>
    </location>
</feature>
<organism>
    <name type="scientific">Arabidopsis thaliana</name>
    <name type="common">Mouse-ear cress</name>
    <dbReference type="NCBI Taxonomy" id="3702"/>
    <lineage>
        <taxon>Eukaryota</taxon>
        <taxon>Viridiplantae</taxon>
        <taxon>Streptophyta</taxon>
        <taxon>Embryophyta</taxon>
        <taxon>Tracheophyta</taxon>
        <taxon>Spermatophyta</taxon>
        <taxon>Magnoliopsida</taxon>
        <taxon>eudicotyledons</taxon>
        <taxon>Gunneridae</taxon>
        <taxon>Pentapetalae</taxon>
        <taxon>rosids</taxon>
        <taxon>malvids</taxon>
        <taxon>Brassicales</taxon>
        <taxon>Brassicaceae</taxon>
        <taxon>Camelineae</taxon>
        <taxon>Arabidopsis</taxon>
    </lineage>
</organism>
<proteinExistence type="evidence at transcript level"/>
<evidence type="ECO:0000255" key="1">
    <source>
        <dbReference type="PROSITE-ProRule" id="PRU00291"/>
    </source>
</evidence>
<evidence type="ECO:0000256" key="2">
    <source>
        <dbReference type="SAM" id="MobiDB-lite"/>
    </source>
</evidence>
<evidence type="ECO:0000269" key="3">
    <source>
    </source>
</evidence>
<evidence type="ECO:0000305" key="4"/>
<dbReference type="EMBL" id="AB473874">
    <property type="protein sequence ID" value="BAH10585.1"/>
    <property type="molecule type" value="mRNA"/>
</dbReference>
<dbReference type="EMBL" id="AL035605">
    <property type="protein sequence ID" value="CAB38293.1"/>
    <property type="molecule type" value="Genomic_DNA"/>
</dbReference>
<dbReference type="EMBL" id="AL161591">
    <property type="protein sequence ID" value="CAB80419.1"/>
    <property type="molecule type" value="Genomic_DNA"/>
</dbReference>
<dbReference type="EMBL" id="CP002687">
    <property type="protein sequence ID" value="AEE86808.1"/>
    <property type="molecule type" value="Genomic_DNA"/>
</dbReference>
<dbReference type="EMBL" id="AY072144">
    <property type="protein sequence ID" value="AAL59966.1"/>
    <property type="molecule type" value="mRNA"/>
</dbReference>
<dbReference type="EMBL" id="AY122976">
    <property type="protein sequence ID" value="AAM67509.1"/>
    <property type="molecule type" value="mRNA"/>
</dbReference>
<dbReference type="EMBL" id="AY087291">
    <property type="protein sequence ID" value="AAM64844.1"/>
    <property type="molecule type" value="mRNA"/>
</dbReference>
<dbReference type="PIR" id="T04711">
    <property type="entry name" value="T04711"/>
</dbReference>
<dbReference type="RefSeq" id="NP_195470.1">
    <property type="nucleotide sequence ID" value="NM_119918.3"/>
</dbReference>
<dbReference type="SMR" id="Q9SZE8"/>
<dbReference type="BioGRID" id="15190">
    <property type="interactions" value="8"/>
</dbReference>
<dbReference type="FunCoup" id="Q9SZE8">
    <property type="interactions" value="1"/>
</dbReference>
<dbReference type="IntAct" id="Q9SZE8">
    <property type="interactions" value="4"/>
</dbReference>
<dbReference type="STRING" id="3702.Q9SZE8"/>
<dbReference type="PaxDb" id="3702-AT4G37540.1"/>
<dbReference type="EnsemblPlants" id="AT4G37540.1">
    <property type="protein sequence ID" value="AT4G37540.1"/>
    <property type="gene ID" value="AT4G37540"/>
</dbReference>
<dbReference type="GeneID" id="829909"/>
<dbReference type="Gramene" id="AT4G37540.1">
    <property type="protein sequence ID" value="AT4G37540.1"/>
    <property type="gene ID" value="AT4G37540"/>
</dbReference>
<dbReference type="KEGG" id="ath:AT4G37540"/>
<dbReference type="Araport" id="AT4G37540"/>
<dbReference type="TAIR" id="AT4G37540">
    <property type="gene designation" value="LBD39"/>
</dbReference>
<dbReference type="eggNOG" id="ENOG502QU8T">
    <property type="taxonomic scope" value="Eukaryota"/>
</dbReference>
<dbReference type="HOGENOM" id="CLU_054665_1_1_1"/>
<dbReference type="InParanoid" id="Q9SZE8"/>
<dbReference type="OMA" id="ICNDIGR"/>
<dbReference type="PhylomeDB" id="Q9SZE8"/>
<dbReference type="PRO" id="PR:Q9SZE8"/>
<dbReference type="Proteomes" id="UP000006548">
    <property type="component" value="Chromosome 4"/>
</dbReference>
<dbReference type="ExpressionAtlas" id="Q9SZE8">
    <property type="expression patterns" value="baseline and differential"/>
</dbReference>
<dbReference type="InterPro" id="IPR004883">
    <property type="entry name" value="LOB"/>
</dbReference>
<dbReference type="PANTHER" id="PTHR31304">
    <property type="entry name" value="LOB DOMAIN-CONTAINING PROTEIN 38"/>
    <property type="match status" value="1"/>
</dbReference>
<dbReference type="PANTHER" id="PTHR31304:SF1">
    <property type="entry name" value="LOB DOMAIN-CONTAINING PROTEIN 39"/>
    <property type="match status" value="1"/>
</dbReference>
<dbReference type="Pfam" id="PF03195">
    <property type="entry name" value="LOB"/>
    <property type="match status" value="1"/>
</dbReference>
<dbReference type="PROSITE" id="PS50891">
    <property type="entry name" value="LOB"/>
    <property type="match status" value="1"/>
</dbReference>
<accession>Q9SZE8</accession>
<accession>B7XG95</accession>
<accession>Q8LBC9</accession>
<name>LBD39_ARATH</name>
<reference key="1">
    <citation type="journal article" date="2009" name="Plant J.">
        <title>Characterization of genes in the ASYMMETRIC LEAVES2/LATERAL ORGAN BOUNDARIES (AS2/LOB) family in Arabidopsis thaliana, and functional and molecular comparisons between AS2 and other family members.</title>
        <authorList>
            <person name="Matsumura Y."/>
            <person name="Iwakawa H."/>
            <person name="Machida Y."/>
            <person name="Machida C."/>
        </authorList>
    </citation>
    <scope>NUCLEOTIDE SEQUENCE [MRNA]</scope>
    <source>
        <strain>cv. Columbia</strain>
    </source>
</reference>
<reference key="2">
    <citation type="journal article" date="1999" name="Nature">
        <title>Sequence and analysis of chromosome 4 of the plant Arabidopsis thaliana.</title>
        <authorList>
            <person name="Mayer K.F.X."/>
            <person name="Schueller C."/>
            <person name="Wambutt R."/>
            <person name="Murphy G."/>
            <person name="Volckaert G."/>
            <person name="Pohl T."/>
            <person name="Duesterhoeft A."/>
            <person name="Stiekema W."/>
            <person name="Entian K.-D."/>
            <person name="Terryn N."/>
            <person name="Harris B."/>
            <person name="Ansorge W."/>
            <person name="Brandt P."/>
            <person name="Grivell L.A."/>
            <person name="Rieger M."/>
            <person name="Weichselgartner M."/>
            <person name="de Simone V."/>
            <person name="Obermaier B."/>
            <person name="Mache R."/>
            <person name="Mueller M."/>
            <person name="Kreis M."/>
            <person name="Delseny M."/>
            <person name="Puigdomenech P."/>
            <person name="Watson M."/>
            <person name="Schmidtheini T."/>
            <person name="Reichert B."/>
            <person name="Portetelle D."/>
            <person name="Perez-Alonso M."/>
            <person name="Boutry M."/>
            <person name="Bancroft I."/>
            <person name="Vos P."/>
            <person name="Hoheisel J."/>
            <person name="Zimmermann W."/>
            <person name="Wedler H."/>
            <person name="Ridley P."/>
            <person name="Langham S.-A."/>
            <person name="McCullagh B."/>
            <person name="Bilham L."/>
            <person name="Robben J."/>
            <person name="van der Schueren J."/>
            <person name="Grymonprez B."/>
            <person name="Chuang Y.-J."/>
            <person name="Vandenbussche F."/>
            <person name="Braeken M."/>
            <person name="Weltjens I."/>
            <person name="Voet M."/>
            <person name="Bastiaens I."/>
            <person name="Aert R."/>
            <person name="Defoor E."/>
            <person name="Weitzenegger T."/>
            <person name="Bothe G."/>
            <person name="Ramsperger U."/>
            <person name="Hilbert H."/>
            <person name="Braun M."/>
            <person name="Holzer E."/>
            <person name="Brandt A."/>
            <person name="Peters S."/>
            <person name="van Staveren M."/>
            <person name="Dirkse W."/>
            <person name="Mooijman P."/>
            <person name="Klein Lankhorst R."/>
            <person name="Rose M."/>
            <person name="Hauf J."/>
            <person name="Koetter P."/>
            <person name="Berneiser S."/>
            <person name="Hempel S."/>
            <person name="Feldpausch M."/>
            <person name="Lamberth S."/>
            <person name="Van den Daele H."/>
            <person name="De Keyser A."/>
            <person name="Buysshaert C."/>
            <person name="Gielen J."/>
            <person name="Villarroel R."/>
            <person name="De Clercq R."/>
            <person name="van Montagu M."/>
            <person name="Rogers J."/>
            <person name="Cronin A."/>
            <person name="Quail M.A."/>
            <person name="Bray-Allen S."/>
            <person name="Clark L."/>
            <person name="Doggett J."/>
            <person name="Hall S."/>
            <person name="Kay M."/>
            <person name="Lennard N."/>
            <person name="McLay K."/>
            <person name="Mayes R."/>
            <person name="Pettett A."/>
            <person name="Rajandream M.A."/>
            <person name="Lyne M."/>
            <person name="Benes V."/>
            <person name="Rechmann S."/>
            <person name="Borkova D."/>
            <person name="Bloecker H."/>
            <person name="Scharfe M."/>
            <person name="Grimm M."/>
            <person name="Loehnert T.-H."/>
            <person name="Dose S."/>
            <person name="de Haan M."/>
            <person name="Maarse A.C."/>
            <person name="Schaefer M."/>
            <person name="Mueller-Auer S."/>
            <person name="Gabel C."/>
            <person name="Fuchs M."/>
            <person name="Fartmann B."/>
            <person name="Granderath K."/>
            <person name="Dauner D."/>
            <person name="Herzl A."/>
            <person name="Neumann S."/>
            <person name="Argiriou A."/>
            <person name="Vitale D."/>
            <person name="Liguori R."/>
            <person name="Piravandi E."/>
            <person name="Massenet O."/>
            <person name="Quigley F."/>
            <person name="Clabauld G."/>
            <person name="Muendlein A."/>
            <person name="Felber R."/>
            <person name="Schnabl S."/>
            <person name="Hiller R."/>
            <person name="Schmidt W."/>
            <person name="Lecharny A."/>
            <person name="Aubourg S."/>
            <person name="Chefdor F."/>
            <person name="Cooke R."/>
            <person name="Berger C."/>
            <person name="Monfort A."/>
            <person name="Casacuberta E."/>
            <person name="Gibbons T."/>
            <person name="Weber N."/>
            <person name="Vandenbol M."/>
            <person name="Bargues M."/>
            <person name="Terol J."/>
            <person name="Torres A."/>
            <person name="Perez-Perez A."/>
            <person name="Purnelle B."/>
            <person name="Bent E."/>
            <person name="Johnson S."/>
            <person name="Tacon D."/>
            <person name="Jesse T."/>
            <person name="Heijnen L."/>
            <person name="Schwarz S."/>
            <person name="Scholler P."/>
            <person name="Heber S."/>
            <person name="Francs P."/>
            <person name="Bielke C."/>
            <person name="Frishman D."/>
            <person name="Haase D."/>
            <person name="Lemcke K."/>
            <person name="Mewes H.-W."/>
            <person name="Stocker S."/>
            <person name="Zaccaria P."/>
            <person name="Bevan M."/>
            <person name="Wilson R.K."/>
            <person name="de la Bastide M."/>
            <person name="Habermann K."/>
            <person name="Parnell L."/>
            <person name="Dedhia N."/>
            <person name="Gnoj L."/>
            <person name="Schutz K."/>
            <person name="Huang E."/>
            <person name="Spiegel L."/>
            <person name="Sekhon M."/>
            <person name="Murray J."/>
            <person name="Sheet P."/>
            <person name="Cordes M."/>
            <person name="Abu-Threideh J."/>
            <person name="Stoneking T."/>
            <person name="Kalicki J."/>
            <person name="Graves T."/>
            <person name="Harmon G."/>
            <person name="Edwards J."/>
            <person name="Latreille P."/>
            <person name="Courtney L."/>
            <person name="Cloud J."/>
            <person name="Abbott A."/>
            <person name="Scott K."/>
            <person name="Johnson D."/>
            <person name="Minx P."/>
            <person name="Bentley D."/>
            <person name="Fulton B."/>
            <person name="Miller N."/>
            <person name="Greco T."/>
            <person name="Kemp K."/>
            <person name="Kramer J."/>
            <person name="Fulton L."/>
            <person name="Mardis E."/>
            <person name="Dante M."/>
            <person name="Pepin K."/>
            <person name="Hillier L.W."/>
            <person name="Nelson J."/>
            <person name="Spieth J."/>
            <person name="Ryan E."/>
            <person name="Andrews S."/>
            <person name="Geisel C."/>
            <person name="Layman D."/>
            <person name="Du H."/>
            <person name="Ali J."/>
            <person name="Berghoff A."/>
            <person name="Jones K."/>
            <person name="Drone K."/>
            <person name="Cotton M."/>
            <person name="Joshu C."/>
            <person name="Antonoiu B."/>
            <person name="Zidanic M."/>
            <person name="Strong C."/>
            <person name="Sun H."/>
            <person name="Lamar B."/>
            <person name="Yordan C."/>
            <person name="Ma P."/>
            <person name="Zhong J."/>
            <person name="Preston R."/>
            <person name="Vil D."/>
            <person name="Shekher M."/>
            <person name="Matero A."/>
            <person name="Shah R."/>
            <person name="Swaby I.K."/>
            <person name="O'Shaughnessy A."/>
            <person name="Rodriguez M."/>
            <person name="Hoffman J."/>
            <person name="Till S."/>
            <person name="Granat S."/>
            <person name="Shohdy N."/>
            <person name="Hasegawa A."/>
            <person name="Hameed A."/>
            <person name="Lodhi M."/>
            <person name="Johnson A."/>
            <person name="Chen E."/>
            <person name="Marra M.A."/>
            <person name="Martienssen R."/>
            <person name="McCombie W.R."/>
        </authorList>
    </citation>
    <scope>NUCLEOTIDE SEQUENCE [LARGE SCALE GENOMIC DNA]</scope>
    <source>
        <strain>cv. Columbia</strain>
    </source>
</reference>
<reference key="3">
    <citation type="journal article" date="2017" name="Plant J.">
        <title>Araport11: a complete reannotation of the Arabidopsis thaliana reference genome.</title>
        <authorList>
            <person name="Cheng C.Y."/>
            <person name="Krishnakumar V."/>
            <person name="Chan A.P."/>
            <person name="Thibaud-Nissen F."/>
            <person name="Schobel S."/>
            <person name="Town C.D."/>
        </authorList>
    </citation>
    <scope>GENOME REANNOTATION</scope>
    <source>
        <strain>cv. Columbia</strain>
    </source>
</reference>
<reference key="4">
    <citation type="journal article" date="2003" name="Science">
        <title>Empirical analysis of transcriptional activity in the Arabidopsis genome.</title>
        <authorList>
            <person name="Yamada K."/>
            <person name="Lim J."/>
            <person name="Dale J.M."/>
            <person name="Chen H."/>
            <person name="Shinn P."/>
            <person name="Palm C.J."/>
            <person name="Southwick A.M."/>
            <person name="Wu H.C."/>
            <person name="Kim C.J."/>
            <person name="Nguyen M."/>
            <person name="Pham P.K."/>
            <person name="Cheuk R.F."/>
            <person name="Karlin-Newmann G."/>
            <person name="Liu S.X."/>
            <person name="Lam B."/>
            <person name="Sakano H."/>
            <person name="Wu T."/>
            <person name="Yu G."/>
            <person name="Miranda M."/>
            <person name="Quach H.L."/>
            <person name="Tripp M."/>
            <person name="Chang C.H."/>
            <person name="Lee J.M."/>
            <person name="Toriumi M.J."/>
            <person name="Chan M.M."/>
            <person name="Tang C.C."/>
            <person name="Onodera C.S."/>
            <person name="Deng J.M."/>
            <person name="Akiyama K."/>
            <person name="Ansari Y."/>
            <person name="Arakawa T."/>
            <person name="Banh J."/>
            <person name="Banno F."/>
            <person name="Bowser L."/>
            <person name="Brooks S.Y."/>
            <person name="Carninci P."/>
            <person name="Chao Q."/>
            <person name="Choy N."/>
            <person name="Enju A."/>
            <person name="Goldsmith A.D."/>
            <person name="Gurjal M."/>
            <person name="Hansen N.F."/>
            <person name="Hayashizaki Y."/>
            <person name="Johnson-Hopson C."/>
            <person name="Hsuan V.W."/>
            <person name="Iida K."/>
            <person name="Karnes M."/>
            <person name="Khan S."/>
            <person name="Koesema E."/>
            <person name="Ishida J."/>
            <person name="Jiang P.X."/>
            <person name="Jones T."/>
            <person name="Kawai J."/>
            <person name="Kamiya A."/>
            <person name="Meyers C."/>
            <person name="Nakajima M."/>
            <person name="Narusaka M."/>
            <person name="Seki M."/>
            <person name="Sakurai T."/>
            <person name="Satou M."/>
            <person name="Tamse R."/>
            <person name="Vaysberg M."/>
            <person name="Wallender E.K."/>
            <person name="Wong C."/>
            <person name="Yamamura Y."/>
            <person name="Yuan S."/>
            <person name="Shinozaki K."/>
            <person name="Davis R.W."/>
            <person name="Theologis A."/>
            <person name="Ecker J.R."/>
        </authorList>
    </citation>
    <scope>NUCLEOTIDE SEQUENCE [LARGE SCALE MRNA]</scope>
    <source>
        <strain>cv. Columbia</strain>
    </source>
</reference>
<reference key="5">
    <citation type="submission" date="2002-03" db="EMBL/GenBank/DDBJ databases">
        <title>Full-length cDNA from Arabidopsis thaliana.</title>
        <authorList>
            <person name="Brover V.V."/>
            <person name="Troukhan M.E."/>
            <person name="Alexandrov N.A."/>
            <person name="Lu Y.-P."/>
            <person name="Flavell R.B."/>
            <person name="Feldmann K.A."/>
        </authorList>
    </citation>
    <scope>NUCLEOTIDE SEQUENCE [LARGE SCALE MRNA]</scope>
</reference>
<reference key="6">
    <citation type="journal article" date="2002" name="Plant Physiol.">
        <title>The LATERAL ORGAN BOUNDARIES gene defines a novel, plant-specific gene family.</title>
        <authorList>
            <person name="Shuai B."/>
            <person name="Reynaga-Pena C.G."/>
            <person name="Springer P.S."/>
        </authorList>
    </citation>
    <scope>TISSUE SPECIFICITY</scope>
    <scope>GENE FAMILY</scope>
    <scope>NOMENCLATURE</scope>
</reference>
<reference key="7">
    <citation type="journal article" date="2002" name="Plant Cell Physiol.">
        <title>The ASYMMETRIC LEAVES2 gene of Arabidopsis thaliana, required for formation of a symmetric flat leaf lamina, encodes a member of a novel family of proteins characterized by cysteine repeats and a leucine zipper.</title>
        <authorList>
            <person name="Iwakawa H."/>
            <person name="Ueno Y."/>
            <person name="Semiarti E."/>
            <person name="Onouchi H."/>
            <person name="Kojima S."/>
            <person name="Tsukaya H."/>
            <person name="Hasebe M."/>
            <person name="Soma T."/>
            <person name="Ikezaki M."/>
            <person name="Machida C."/>
            <person name="Machida Y."/>
        </authorList>
    </citation>
    <scope>GENE FAMILY</scope>
    <scope>NOMENCLATURE</scope>
</reference>
<keyword id="KW-1185">Reference proteome</keyword>
<comment type="tissue specificity">
    <text evidence="3">Expressed in young shoots, roots, stems, leaves and flowers.</text>
</comment>
<comment type="similarity">
    <text evidence="4">Belongs to the LOB domain-containing protein family.</text>
</comment>
<gene>
    <name type="primary">LBD39</name>
    <name type="synonym">ASL41</name>
    <name type="ordered locus">At4g37540</name>
    <name type="ORF">F19F18.30</name>
</gene>